<reference key="1">
    <citation type="journal article" date="2006" name="J. Bacteriol.">
        <title>Complete genome sequence of Yersinia pestis strains Antiqua and Nepal516: evidence of gene reduction in an emerging pathogen.</title>
        <authorList>
            <person name="Chain P.S.G."/>
            <person name="Hu P."/>
            <person name="Malfatti S.A."/>
            <person name="Radnedge L."/>
            <person name="Larimer F."/>
            <person name="Vergez L.M."/>
            <person name="Worsham P."/>
            <person name="Chu M.C."/>
            <person name="Andersen G.L."/>
        </authorList>
    </citation>
    <scope>NUCLEOTIDE SEQUENCE [LARGE SCALE GENOMIC DNA]</scope>
    <source>
        <strain>Antiqua</strain>
    </source>
</reference>
<evidence type="ECO:0000255" key="1">
    <source>
        <dbReference type="HAMAP-Rule" id="MF_00302"/>
    </source>
</evidence>
<sequence length="106" mass="12305">MGKNNDWLNFEHLVKDKQIEALQPPSMYKVILNNDDYTPMEFVIDVLQKFFSYDIERATQLMLNVHYQGKAICGVFTAEVAETKVAHVNQYARENEHPLLCTLEKA</sequence>
<gene>
    <name evidence="1" type="primary">clpS</name>
    <name type="ordered locus">YPA_0657</name>
</gene>
<organism>
    <name type="scientific">Yersinia pestis bv. Antiqua (strain Antiqua)</name>
    <dbReference type="NCBI Taxonomy" id="360102"/>
    <lineage>
        <taxon>Bacteria</taxon>
        <taxon>Pseudomonadati</taxon>
        <taxon>Pseudomonadota</taxon>
        <taxon>Gammaproteobacteria</taxon>
        <taxon>Enterobacterales</taxon>
        <taxon>Yersiniaceae</taxon>
        <taxon>Yersinia</taxon>
    </lineage>
</organism>
<protein>
    <recommendedName>
        <fullName evidence="1">ATP-dependent Clp protease adapter protein ClpS</fullName>
    </recommendedName>
</protein>
<name>CLPS_YERPA</name>
<feature type="chain" id="PRO_0000300735" description="ATP-dependent Clp protease adapter protein ClpS">
    <location>
        <begin position="1"/>
        <end position="106"/>
    </location>
</feature>
<comment type="function">
    <text evidence="1">Involved in the modulation of the specificity of the ClpAP-mediated ATP-dependent protein degradation.</text>
</comment>
<comment type="subunit">
    <text evidence="1">Binds to the N-terminal domain of the chaperone ClpA.</text>
</comment>
<comment type="similarity">
    <text evidence="1">Belongs to the ClpS family.</text>
</comment>
<proteinExistence type="inferred from homology"/>
<accession>Q1CA97</accession>
<dbReference type="EMBL" id="CP000308">
    <property type="protein sequence ID" value="ABG12625.1"/>
    <property type="molecule type" value="Genomic_DNA"/>
</dbReference>
<dbReference type="RefSeq" id="WP_002211349.1">
    <property type="nucleotide sequence ID" value="NZ_CP009906.1"/>
</dbReference>
<dbReference type="SMR" id="Q1CA97"/>
<dbReference type="GeneID" id="96664964"/>
<dbReference type="KEGG" id="ypa:YPA_0657"/>
<dbReference type="Proteomes" id="UP000001971">
    <property type="component" value="Chromosome"/>
</dbReference>
<dbReference type="GO" id="GO:0030163">
    <property type="term" value="P:protein catabolic process"/>
    <property type="evidence" value="ECO:0007669"/>
    <property type="project" value="InterPro"/>
</dbReference>
<dbReference type="GO" id="GO:0006508">
    <property type="term" value="P:proteolysis"/>
    <property type="evidence" value="ECO:0007669"/>
    <property type="project" value="UniProtKB-UniRule"/>
</dbReference>
<dbReference type="FunFam" id="3.30.1390.10:FF:000002">
    <property type="entry name" value="ATP-dependent Clp protease adapter protein ClpS"/>
    <property type="match status" value="1"/>
</dbReference>
<dbReference type="Gene3D" id="3.30.1390.10">
    <property type="match status" value="1"/>
</dbReference>
<dbReference type="HAMAP" id="MF_00302">
    <property type="entry name" value="ClpS"/>
    <property type="match status" value="1"/>
</dbReference>
<dbReference type="InterPro" id="IPR022935">
    <property type="entry name" value="ClpS"/>
</dbReference>
<dbReference type="InterPro" id="IPR003769">
    <property type="entry name" value="ClpS_core"/>
</dbReference>
<dbReference type="InterPro" id="IPR014719">
    <property type="entry name" value="Ribosomal_bL12_C/ClpS-like"/>
</dbReference>
<dbReference type="NCBIfam" id="NF000670">
    <property type="entry name" value="PRK00033.1-3"/>
    <property type="match status" value="1"/>
</dbReference>
<dbReference type="NCBIfam" id="NF000672">
    <property type="entry name" value="PRK00033.1-5"/>
    <property type="match status" value="1"/>
</dbReference>
<dbReference type="PANTHER" id="PTHR33473:SF19">
    <property type="entry name" value="ATP-DEPENDENT CLP PROTEASE ADAPTER PROTEIN CLPS"/>
    <property type="match status" value="1"/>
</dbReference>
<dbReference type="PANTHER" id="PTHR33473">
    <property type="entry name" value="ATP-DEPENDENT CLP PROTEASE ADAPTER PROTEIN CLPS1, CHLOROPLASTIC"/>
    <property type="match status" value="1"/>
</dbReference>
<dbReference type="Pfam" id="PF02617">
    <property type="entry name" value="ClpS"/>
    <property type="match status" value="1"/>
</dbReference>
<dbReference type="SUPFAM" id="SSF54736">
    <property type="entry name" value="ClpS-like"/>
    <property type="match status" value="1"/>
</dbReference>